<gene>
    <name type="primary">EN3GAL</name>
</gene>
<sequence length="249" mass="26690">MKLFVVLACLAAPGTFPFVDAATVIPANSFSSFSTYWNNFYPWGTDHNGSGRMASANIIVASNTLSLIATPTSNPSPPTSTSNPKPAIHYASGAIHAKEHITVTAANAYTVSGEFSAPTAVGTWPAFWLTAVSGWPPEVDIGEWKGTADNWFNTFNTSSVVKSTLVDWPTDLSFHSVKAVLTAQSNNKDVKIDFYMDNKFIVTQYGSGFVGKAMYLIINLQMEGSSGSPGPSGRTVYKARNVQVTRTGN</sequence>
<name>E3GAL_FLAVE</name>
<feature type="signal peptide" evidence="3">
    <location>
        <begin position="1"/>
        <end position="21"/>
    </location>
</feature>
<feature type="chain" id="PRO_0000422019" description="Galactan endo-beta-1,3-galactanase">
    <location>
        <begin position="22"/>
        <end position="249"/>
    </location>
</feature>
<feature type="domain" description="GH16" evidence="2">
    <location>
        <begin position="34"/>
        <end position="247"/>
    </location>
</feature>
<feature type="active site" description="Nucleophile" evidence="5">
    <location>
        <position position="138"/>
    </location>
</feature>
<feature type="active site" description="Proton donor" evidence="5">
    <location>
        <position position="143"/>
    </location>
</feature>
<feature type="glycosylation site" description="N-linked (GlcNAc...) asparagine" evidence="1">
    <location>
        <position position="48"/>
    </location>
</feature>
<feature type="glycosylation site" description="N-linked (GlcNAc...) asparagine" evidence="1">
    <location>
        <position position="156"/>
    </location>
</feature>
<feature type="mutagenesis site" description="Loss of galactan endo-beta-1,3-galactanase activity." evidence="3">
    <original>E</original>
    <variation>D</variation>
    <location>
        <position position="138"/>
    </location>
</feature>
<feature type="mutagenesis site" description="Loss of galactan endo-beta-1,3-galactanase activity." evidence="3">
    <original>E</original>
    <variation>D</variation>
    <location>
        <position position="143"/>
    </location>
</feature>
<organism>
    <name type="scientific">Flammulina velutipes</name>
    <name type="common">Agaricus velutipes</name>
    <dbReference type="NCBI Taxonomy" id="38945"/>
    <lineage>
        <taxon>Eukaryota</taxon>
        <taxon>Fungi</taxon>
        <taxon>Dikarya</taxon>
        <taxon>Basidiomycota</taxon>
        <taxon>Agaricomycotina</taxon>
        <taxon>Agaricomycetes</taxon>
        <taxon>Agaricomycetidae</taxon>
        <taxon>Agaricales</taxon>
        <taxon>Marasmiineae</taxon>
        <taxon>Physalacriaceae</taxon>
        <taxon>Flammulina</taxon>
    </lineage>
</organism>
<accession>F7J1C8</accession>
<comment type="function">
    <text evidence="3">Specifically hydrolyzes beta-1,3-galactan in an endo-fashion. Requires at least 3 contiguous beta-1,3-residues.</text>
</comment>
<comment type="catalytic activity">
    <reaction evidence="3">
        <text>The enzyme specifically hydrolyzes beta-1,3-galactan and beta-1,3-galactooligosaccharides.</text>
        <dbReference type="EC" id="3.2.1.181"/>
    </reaction>
</comment>
<comment type="biophysicochemical properties">
    <kinetics>
        <KM evidence="3">0.137 mM for beta-1,3-galactan</KM>
        <KM evidence="3">1.25 mM for beta-1,3-galactotriose</KM>
        <KM evidence="3">0.57 mM for beta-1,3-galactotetraose</KM>
        <text>kcat is 7.56 sec(-1) with beta-1,3-galactan. kcat is 5.47 sec(-1) with beta-1,3-galactotriose. kcat is 6.50 sec(-1) with beta-1,3-galactotetraose.</text>
    </kinetics>
    <phDependence>
        <text evidence="3">Optimum pH is 4.0-6.0.</text>
    </phDependence>
    <temperatureDependence>
        <text evidence="3">Optimum temperature is 50 degrees Celsius.</text>
    </temperatureDependence>
</comment>
<comment type="PTM">
    <text evidence="3">N-glycosylated.</text>
</comment>
<comment type="similarity">
    <text evidence="4">Belongs to the glycosyl hydrolase 16 family.</text>
</comment>
<evidence type="ECO:0000255" key="1"/>
<evidence type="ECO:0000255" key="2">
    <source>
        <dbReference type="PROSITE-ProRule" id="PRU01098"/>
    </source>
</evidence>
<evidence type="ECO:0000269" key="3">
    <source>
    </source>
</evidence>
<evidence type="ECO:0000305" key="4"/>
<evidence type="ECO:0000305" key="5">
    <source>
    </source>
</evidence>
<reference key="1">
    <citation type="journal article" date="2011" name="J. Biol. Chem.">
        <title>Endo-beta-1,3-galactanase from winter mushroom Flammulina velutipes.</title>
        <authorList>
            <person name="Kotake T."/>
            <person name="Hirata N."/>
            <person name="Degi Y."/>
            <person name="Ishiguro M."/>
            <person name="Kitazawa K."/>
            <person name="Takata R."/>
            <person name="Ichinose H."/>
            <person name="Kaneko S."/>
            <person name="Igarashi K."/>
            <person name="Samejima M."/>
            <person name="Tsumuraya Y."/>
        </authorList>
    </citation>
    <scope>NUCLEOTIDE SEQUENCE [MRNA]</scope>
    <scope>PROTEIN SEQUENCE OF 22-31</scope>
    <scope>FUNCTION</scope>
    <scope>CATALYTIC ACTIVITY</scope>
    <scope>ACTIVE SITE</scope>
    <scope>GLYCOSYLATION</scope>
    <scope>BIOPHYSICOCHEMICAL PROPERTIES</scope>
    <scope>MUTAGENESIS OF GLU-138 AND GLU-143</scope>
</reference>
<proteinExistence type="evidence at protein level"/>
<protein>
    <recommendedName>
        <fullName>Galactan endo-beta-1,3-galactanase</fullName>
        <ecNumber>3.2.1.181</ecNumber>
    </recommendedName>
    <alternativeName>
        <fullName>Endo-beta-1,3-galactanase</fullName>
        <shortName>FvEN3GAL</shortName>
    </alternativeName>
</protein>
<dbReference type="EC" id="3.2.1.181"/>
<dbReference type="EMBL" id="AB610981">
    <property type="protein sequence ID" value="BAK48741.1"/>
    <property type="molecule type" value="mRNA"/>
</dbReference>
<dbReference type="SMR" id="F7J1C8"/>
<dbReference type="CAZy" id="GH16">
    <property type="family name" value="Glycoside Hydrolase Family 16"/>
</dbReference>
<dbReference type="GlyCosmos" id="F7J1C8">
    <property type="glycosylation" value="2 sites, No reported glycans"/>
</dbReference>
<dbReference type="KEGG" id="ag:BAK48741"/>
<dbReference type="BioCyc" id="MetaCyc:MONOMER-17420"/>
<dbReference type="BRENDA" id="3.2.1.181">
    <property type="organism ID" value="1577"/>
</dbReference>
<dbReference type="GO" id="GO:0004553">
    <property type="term" value="F:hydrolase activity, hydrolyzing O-glycosyl compounds"/>
    <property type="evidence" value="ECO:0000314"/>
    <property type="project" value="UniProtKB"/>
</dbReference>
<dbReference type="GO" id="GO:0005975">
    <property type="term" value="P:carbohydrate metabolic process"/>
    <property type="evidence" value="ECO:0000314"/>
    <property type="project" value="UniProtKB"/>
</dbReference>
<dbReference type="FunFam" id="2.60.120.200:FF:000387">
    <property type="entry name" value="Galactan endo-beta-1,3-galactanase"/>
    <property type="match status" value="1"/>
</dbReference>
<dbReference type="Gene3D" id="2.60.120.200">
    <property type="match status" value="1"/>
</dbReference>
<dbReference type="InterPro" id="IPR013320">
    <property type="entry name" value="ConA-like_dom_sf"/>
</dbReference>
<dbReference type="InterPro" id="IPR000757">
    <property type="entry name" value="GH16"/>
</dbReference>
<dbReference type="SUPFAM" id="SSF49899">
    <property type="entry name" value="Concanavalin A-like lectins/glucanases"/>
    <property type="match status" value="1"/>
</dbReference>
<dbReference type="PROSITE" id="PS51762">
    <property type="entry name" value="GH16_2"/>
    <property type="match status" value="1"/>
</dbReference>
<keyword id="KW-0903">Direct protein sequencing</keyword>
<keyword id="KW-0325">Glycoprotein</keyword>
<keyword id="KW-0326">Glycosidase</keyword>
<keyword id="KW-0378">Hydrolase</keyword>
<keyword id="KW-0732">Signal</keyword>